<proteinExistence type="evidence at transcript level"/>
<accession>D0ZTB2</accession>
<sequence length="902" mass="99783">MLKIITRQLFARLNRHLPYRLVHRDPLPGAQTAVNATIPPSLSERCLKVAAMEQETLWRVFDTHPEGLNAAEVTRAREKHGENRLPAQKPSPWWVHLWVCYRNPFNILLTILGGISYATEDLFAAGVIALMVGISTLLNFVQEARSTKAADALKAMVSNTATVLRVINENGENAWLELPIDQLVPGDIIKLAAGDMIPADLRIIQARDLFVAQASLTGESLPVEKVAATREPRQNNPLECDTLCFMGTNVVSGTAQAVVMATGAGTWFGQLAGRVSEQDNEQNAFQKGISRVSMLLIRFMLVMAPVVLIINGYTKGDWWEAALFALSVAVGLTPEMLPMIVTSTLARGAVKLSKQKVIVKHLDAIQNFGAMDILCTDKTGTLTQDKIVLENHTDISGKPSEHVLHCAWLNSHYQTGLKNLLDTAVLEGVDETAARQLSGRWQKIDEIPFDFERRRMSVVVAEDSNVHQLVCKGALQEILNVCTQVRHNGDIVPLDDNMLRRVKRVTDTLNRQGLRVVAVATKYLPAREGDYQRIDESDLILEGYIAFLDPPKETTAPALKALKASGITVKILTGDSELVAAKVCHEVGLDAGDVIIGSDIEGLSDDALAALAARTTLFARLTPMHKERIVTLLKREGHVVGFMGDGINDAPALRAADIGISVDGAVDIAREAADIILLEKSLMVLEEGVIEGRRTFSNMLKYIKMTASSNFGNVFSVLVASAFLPFLPMLPLHLLIQNLLYDVSQVAIPFDNVDEEQIQKPQRWNPADLGRFMVFFGPISSIFDILTFCLMWWVFHANTPETQTLFQSGWFVVGLLSQTLIVHMIRTRRLPFIQSRAAWPLMAMTLLVMVVGVSLPFSPLASYLQLQALPLSYFPWLIAILVGYMTLTQLVKGFYSRRYGWQ</sequence>
<keyword id="KW-0067">ATP-binding</keyword>
<keyword id="KW-0997">Cell inner membrane</keyword>
<keyword id="KW-1003">Cell membrane</keyword>
<keyword id="KW-0460">Magnesium</keyword>
<keyword id="KW-0472">Membrane</keyword>
<keyword id="KW-0479">Metal-binding</keyword>
<keyword id="KW-0547">Nucleotide-binding</keyword>
<keyword id="KW-0597">Phosphoprotein</keyword>
<keyword id="KW-1278">Translocase</keyword>
<keyword id="KW-0812">Transmembrane</keyword>
<keyword id="KW-1133">Transmembrane helix</keyword>
<keyword id="KW-0813">Transport</keyword>
<name>ATMA_SALT1</name>
<organism>
    <name type="scientific">Salmonella typhimurium (strain 14028s / SGSC 2262)</name>
    <dbReference type="NCBI Taxonomy" id="588858"/>
    <lineage>
        <taxon>Bacteria</taxon>
        <taxon>Pseudomonadati</taxon>
        <taxon>Pseudomonadota</taxon>
        <taxon>Gammaproteobacteria</taxon>
        <taxon>Enterobacterales</taxon>
        <taxon>Enterobacteriaceae</taxon>
        <taxon>Salmonella</taxon>
    </lineage>
</organism>
<comment type="function">
    <text evidence="5">Mediates magnesium influx to the cytosol.</text>
</comment>
<comment type="catalytic activity">
    <reaction evidence="2">
        <text>Mg(2+)(out) + ATP + H2O = Mg(2+)(in) + ADP + phosphate + H(+)</text>
        <dbReference type="Rhea" id="RHEA:10260"/>
        <dbReference type="ChEBI" id="CHEBI:15377"/>
        <dbReference type="ChEBI" id="CHEBI:15378"/>
        <dbReference type="ChEBI" id="CHEBI:18420"/>
        <dbReference type="ChEBI" id="CHEBI:30616"/>
        <dbReference type="ChEBI" id="CHEBI:43474"/>
        <dbReference type="ChEBI" id="CHEBI:456216"/>
        <dbReference type="EC" id="7.2.2.14"/>
    </reaction>
</comment>
<comment type="subcellular location">
    <subcellularLocation>
        <location evidence="5">Cell inner membrane</location>
        <topology evidence="5">Multi-pass membrane protein</topology>
    </subcellularLocation>
</comment>
<comment type="induction">
    <text evidence="4">By low extracellular levels of Mg(2+) and by low levels of proline; induction is higher in the absence of both. Also by osmotic shock (0.3 M NaCl). The leader of mgtA mRNA functions as a riboswitch; at low Mg(2+) stem loop 'C' forms which favors transcription of the full-length mgtA mRNA. Under limiting proline levels the 17 residue, proline-rich MgtL peptide encoded within the mgtA leader is unable to be fully translated, and the same stem loop 'C' is able to fold, again favoring transcription of the full mgtA mRNA. Osmotic shock induction also depends on MgtL translation.</text>
</comment>
<comment type="similarity">
    <text evidence="5">Belongs to the cation transport ATPase (P-type) (TC 3.A.3) family. Type IIIB subfamily.</text>
</comment>
<protein>
    <recommendedName>
        <fullName>Magnesium-transporting ATPase, P-type 1</fullName>
        <ecNumber evidence="2">7.2.2.14</ecNumber>
    </recommendedName>
    <alternativeName>
        <fullName>Mg(2+) transport ATPase, P-type 1</fullName>
    </alternativeName>
</protein>
<feature type="chain" id="PRO_0000403461" description="Magnesium-transporting ATPase, P-type 1">
    <location>
        <begin position="1"/>
        <end position="902"/>
    </location>
</feature>
<feature type="topological domain" description="Cytoplasmic" evidence="3">
    <location>
        <begin position="1"/>
        <end position="98"/>
    </location>
</feature>
<feature type="transmembrane region" description="Helical; Name=1" evidence="3">
    <location>
        <begin position="99"/>
        <end position="119"/>
    </location>
</feature>
<feature type="topological domain" description="Extracellular" evidence="3">
    <location>
        <position position="120"/>
    </location>
</feature>
<feature type="transmembrane region" description="Helical; Name=2" evidence="3">
    <location>
        <begin position="121"/>
        <end position="141"/>
    </location>
</feature>
<feature type="topological domain" description="Cytoplasmic" evidence="3">
    <location>
        <begin position="142"/>
        <end position="291"/>
    </location>
</feature>
<feature type="transmembrane region" description="Helical; Name=3" evidence="3">
    <location>
        <begin position="292"/>
        <end position="312"/>
    </location>
</feature>
<feature type="topological domain" description="Extracellular" evidence="3">
    <location>
        <begin position="313"/>
        <end position="321"/>
    </location>
</feature>
<feature type="transmembrane region" description="Helical; Name=4" evidence="3">
    <location>
        <begin position="322"/>
        <end position="339"/>
    </location>
</feature>
<feature type="topological domain" description="Cytoplasmic" evidence="3">
    <location>
        <begin position="340"/>
        <end position="699"/>
    </location>
</feature>
<feature type="transmembrane region" description="Helical; Name=5" evidence="3">
    <location>
        <begin position="700"/>
        <end position="719"/>
    </location>
</feature>
<feature type="topological domain" description="Extracellular" evidence="3">
    <location>
        <begin position="720"/>
        <end position="728"/>
    </location>
</feature>
<feature type="transmembrane region" description="Helical; Name=6" evidence="3">
    <location>
        <begin position="729"/>
        <end position="748"/>
    </location>
</feature>
<feature type="topological domain" description="Cytoplasmic" evidence="3">
    <location>
        <begin position="749"/>
        <end position="770"/>
    </location>
</feature>
<feature type="transmembrane region" description="Helical; Name=7" evidence="3">
    <location>
        <begin position="771"/>
        <end position="794"/>
    </location>
</feature>
<feature type="topological domain" description="Extracellular" evidence="3">
    <location>
        <begin position="795"/>
        <end position="803"/>
    </location>
</feature>
<feature type="transmembrane region" description="Helical; Name=8" evidence="3">
    <location>
        <begin position="804"/>
        <end position="822"/>
    </location>
</feature>
<feature type="topological domain" description="Cytoplasmic" evidence="3">
    <location>
        <begin position="823"/>
        <end position="835"/>
    </location>
</feature>
<feature type="transmembrane region" description="Helical; Name=9" evidence="3">
    <location>
        <begin position="836"/>
        <end position="855"/>
    </location>
</feature>
<feature type="topological domain" description="Extracellular" evidence="3">
    <location>
        <begin position="856"/>
        <end position="870"/>
    </location>
</feature>
<feature type="transmembrane region" description="Helical; Name=10" evidence="3">
    <location>
        <begin position="871"/>
        <end position="890"/>
    </location>
</feature>
<feature type="topological domain" description="Cytoplasmic" evidence="3">
    <location>
        <begin position="891"/>
        <end position="902"/>
    </location>
</feature>
<feature type="active site" description="4-aspartylphosphate intermediate" evidence="1">
    <location>
        <position position="377"/>
    </location>
</feature>
<feature type="binding site" evidence="3">
    <location>
        <position position="335"/>
    </location>
    <ligand>
        <name>Mg(2+)</name>
        <dbReference type="ChEBI" id="CHEBI:18420"/>
    </ligand>
</feature>
<feature type="binding site" evidence="1">
    <location>
        <position position="645"/>
    </location>
    <ligand>
        <name>Mg(2+)</name>
        <dbReference type="ChEBI" id="CHEBI:18420"/>
    </ligand>
</feature>
<feature type="binding site" evidence="1">
    <location>
        <position position="649"/>
    </location>
    <ligand>
        <name>Mg(2+)</name>
        <dbReference type="ChEBI" id="CHEBI:18420"/>
    </ligand>
</feature>
<feature type="binding site" evidence="3">
    <location>
        <position position="713"/>
    </location>
    <ligand>
        <name>Mg(2+)</name>
        <dbReference type="ChEBI" id="CHEBI:18420"/>
    </ligand>
</feature>
<feature type="binding site" evidence="3">
    <location>
        <position position="738"/>
    </location>
    <ligand>
        <name>Mg(2+)</name>
        <dbReference type="ChEBI" id="CHEBI:18420"/>
    </ligand>
</feature>
<feature type="binding site" evidence="3">
    <location>
        <position position="742"/>
    </location>
    <ligand>
        <name>Mg(2+)</name>
        <dbReference type="ChEBI" id="CHEBI:18420"/>
    </ligand>
</feature>
<reference key="1">
    <citation type="journal article" date="2010" name="J. Bacteriol.">
        <title>Short-term signatures of evolutionary change in the Salmonella enterica serovar typhimurium 14028 genome.</title>
        <authorList>
            <person name="Jarvik T."/>
            <person name="Smillie C."/>
            <person name="Groisman E.A."/>
            <person name="Ochman H."/>
        </authorList>
    </citation>
    <scope>NUCLEOTIDE SEQUENCE [LARGE SCALE GENOMIC DNA]</scope>
    <source>
        <strain>14028s / SGSC 2262</strain>
    </source>
</reference>
<reference key="2">
    <citation type="journal article" date="2010" name="Cell">
        <title>A bacterial mRNA leader that employs different mechanisms to sense disparate intracellular signals.</title>
        <authorList>
            <person name="Park S.Y."/>
            <person name="Cromie M.J."/>
            <person name="Lee E.J."/>
            <person name="Groisman E.A."/>
        </authorList>
    </citation>
    <scope>INDUCTION</scope>
</reference>
<dbReference type="EC" id="7.2.2.14" evidence="2"/>
<dbReference type="EMBL" id="CP001363">
    <property type="protein sequence ID" value="ACY91682.1"/>
    <property type="molecule type" value="Genomic_DNA"/>
</dbReference>
<dbReference type="RefSeq" id="WP_001738655.1">
    <property type="nucleotide sequence ID" value="NZ_CP043402.1"/>
</dbReference>
<dbReference type="SMR" id="D0ZTB2"/>
<dbReference type="KEGG" id="seo:STM14_5349"/>
<dbReference type="PATRIC" id="fig|588858.6.peg.4845"/>
<dbReference type="HOGENOM" id="CLU_002360_6_3_6"/>
<dbReference type="BioCyc" id="SENT588858:STM14_RS23360-MONOMER"/>
<dbReference type="BRENDA" id="7.2.2.14">
    <property type="organism ID" value="2169"/>
</dbReference>
<dbReference type="PHI-base" id="PHI:8203"/>
<dbReference type="Proteomes" id="UP000002695">
    <property type="component" value="Chromosome"/>
</dbReference>
<dbReference type="GO" id="GO:0005886">
    <property type="term" value="C:plasma membrane"/>
    <property type="evidence" value="ECO:0007669"/>
    <property type="project" value="UniProtKB-SubCell"/>
</dbReference>
<dbReference type="GO" id="GO:0005524">
    <property type="term" value="F:ATP binding"/>
    <property type="evidence" value="ECO:0007669"/>
    <property type="project" value="UniProtKB-KW"/>
</dbReference>
<dbReference type="GO" id="GO:0016887">
    <property type="term" value="F:ATP hydrolysis activity"/>
    <property type="evidence" value="ECO:0007669"/>
    <property type="project" value="InterPro"/>
</dbReference>
<dbReference type="GO" id="GO:0046872">
    <property type="term" value="F:metal ion binding"/>
    <property type="evidence" value="ECO:0007669"/>
    <property type="project" value="UniProtKB-KW"/>
</dbReference>
<dbReference type="GO" id="GO:0015444">
    <property type="term" value="F:P-type magnesium transporter activity"/>
    <property type="evidence" value="ECO:0007669"/>
    <property type="project" value="UniProtKB-EC"/>
</dbReference>
<dbReference type="CDD" id="cd02077">
    <property type="entry name" value="P-type_ATPase_Mg"/>
    <property type="match status" value="1"/>
</dbReference>
<dbReference type="FunFam" id="2.70.150.10:FF:000045">
    <property type="entry name" value="Magnesium-translocating P-type ATPase"/>
    <property type="match status" value="1"/>
</dbReference>
<dbReference type="Gene3D" id="3.40.1110.10">
    <property type="entry name" value="Calcium-transporting ATPase, cytoplasmic domain N"/>
    <property type="match status" value="1"/>
</dbReference>
<dbReference type="Gene3D" id="2.70.150.10">
    <property type="entry name" value="Calcium-transporting ATPase, cytoplasmic transduction domain A"/>
    <property type="match status" value="1"/>
</dbReference>
<dbReference type="Gene3D" id="1.20.1110.10">
    <property type="entry name" value="Calcium-transporting ATPase, transmembrane domain"/>
    <property type="match status" value="1"/>
</dbReference>
<dbReference type="Gene3D" id="3.40.50.1000">
    <property type="entry name" value="HAD superfamily/HAD-like"/>
    <property type="match status" value="1"/>
</dbReference>
<dbReference type="InterPro" id="IPR006068">
    <property type="entry name" value="ATPase_P-typ_cation-transptr_C"/>
</dbReference>
<dbReference type="InterPro" id="IPR004014">
    <property type="entry name" value="ATPase_P-typ_cation-transptr_N"/>
</dbReference>
<dbReference type="InterPro" id="IPR023299">
    <property type="entry name" value="ATPase_P-typ_cyto_dom_N"/>
</dbReference>
<dbReference type="InterPro" id="IPR018303">
    <property type="entry name" value="ATPase_P-typ_P_site"/>
</dbReference>
<dbReference type="InterPro" id="IPR023298">
    <property type="entry name" value="ATPase_P-typ_TM_dom_sf"/>
</dbReference>
<dbReference type="InterPro" id="IPR008250">
    <property type="entry name" value="ATPase_P-typ_transduc_dom_A_sf"/>
</dbReference>
<dbReference type="InterPro" id="IPR036412">
    <property type="entry name" value="HAD-like_sf"/>
</dbReference>
<dbReference type="InterPro" id="IPR023214">
    <property type="entry name" value="HAD_sf"/>
</dbReference>
<dbReference type="InterPro" id="IPR006415">
    <property type="entry name" value="P-type_ATPase_IIIB"/>
</dbReference>
<dbReference type="InterPro" id="IPR001757">
    <property type="entry name" value="P_typ_ATPase"/>
</dbReference>
<dbReference type="InterPro" id="IPR044492">
    <property type="entry name" value="P_typ_ATPase_HD_dom"/>
</dbReference>
<dbReference type="NCBIfam" id="TIGR01524">
    <property type="entry name" value="ATPase-IIIB_Mg"/>
    <property type="match status" value="1"/>
</dbReference>
<dbReference type="NCBIfam" id="TIGR01494">
    <property type="entry name" value="ATPase_P-type"/>
    <property type="match status" value="2"/>
</dbReference>
<dbReference type="NCBIfam" id="NF011702">
    <property type="entry name" value="PRK15122.1"/>
    <property type="match status" value="1"/>
</dbReference>
<dbReference type="PANTHER" id="PTHR42861">
    <property type="entry name" value="CALCIUM-TRANSPORTING ATPASE"/>
    <property type="match status" value="1"/>
</dbReference>
<dbReference type="Pfam" id="PF00689">
    <property type="entry name" value="Cation_ATPase_C"/>
    <property type="match status" value="1"/>
</dbReference>
<dbReference type="Pfam" id="PF00690">
    <property type="entry name" value="Cation_ATPase_N"/>
    <property type="match status" value="1"/>
</dbReference>
<dbReference type="Pfam" id="PF00122">
    <property type="entry name" value="E1-E2_ATPase"/>
    <property type="match status" value="1"/>
</dbReference>
<dbReference type="Pfam" id="PF00702">
    <property type="entry name" value="Hydrolase"/>
    <property type="match status" value="1"/>
</dbReference>
<dbReference type="PRINTS" id="PR01836">
    <property type="entry name" value="MGATPASE"/>
</dbReference>
<dbReference type="SFLD" id="SFLDS00003">
    <property type="entry name" value="Haloacid_Dehalogenase"/>
    <property type="match status" value="1"/>
</dbReference>
<dbReference type="SFLD" id="SFLDF00027">
    <property type="entry name" value="p-type_atpase"/>
    <property type="match status" value="1"/>
</dbReference>
<dbReference type="SMART" id="SM00831">
    <property type="entry name" value="Cation_ATPase_N"/>
    <property type="match status" value="1"/>
</dbReference>
<dbReference type="SUPFAM" id="SSF81653">
    <property type="entry name" value="Calcium ATPase, transduction domain A"/>
    <property type="match status" value="1"/>
</dbReference>
<dbReference type="SUPFAM" id="SSF81665">
    <property type="entry name" value="Calcium ATPase, transmembrane domain M"/>
    <property type="match status" value="1"/>
</dbReference>
<dbReference type="SUPFAM" id="SSF56784">
    <property type="entry name" value="HAD-like"/>
    <property type="match status" value="1"/>
</dbReference>
<dbReference type="SUPFAM" id="SSF81660">
    <property type="entry name" value="Metal cation-transporting ATPase, ATP-binding domain N"/>
    <property type="match status" value="1"/>
</dbReference>
<dbReference type="PROSITE" id="PS00154">
    <property type="entry name" value="ATPASE_E1_E2"/>
    <property type="match status" value="1"/>
</dbReference>
<evidence type="ECO:0000250" key="1"/>
<evidence type="ECO:0000250" key="2">
    <source>
        <dbReference type="UniProtKB" id="P36640"/>
    </source>
</evidence>
<evidence type="ECO:0000255" key="3"/>
<evidence type="ECO:0000269" key="4">
    <source>
    </source>
</evidence>
<evidence type="ECO:0000305" key="5"/>
<gene>
    <name type="primary">mgtA</name>
    <name type="ordered locus">STM14_5349</name>
</gene>